<evidence type="ECO:0000255" key="1">
    <source>
        <dbReference type="HAMAP-Rule" id="MF_00044"/>
    </source>
</evidence>
<reference key="1">
    <citation type="journal article" date="2009" name="J. Bacteriol.">
        <title>Complete genome sequence of Erythrobacter litoralis HTCC2594.</title>
        <authorList>
            <person name="Oh H.M."/>
            <person name="Giovannoni S.J."/>
            <person name="Ferriera S."/>
            <person name="Johnson J."/>
            <person name="Cho J.C."/>
        </authorList>
    </citation>
    <scope>NUCLEOTIDE SEQUENCE [LARGE SCALE GENOMIC DNA]</scope>
    <source>
        <strain>HTCC2594</strain>
    </source>
</reference>
<proteinExistence type="inferred from homology"/>
<sequence>MHAYRTHNCAALSKKNVGETVRLSGWVHNKRDHGGVLFVDLRDHYGITQIVADEDSAALPVLDKLKLESVVTIDGDVKARDAEAVNPNLPTGEIEVFARSVEIQSRAEELPLIVNSAEDYPEDVRLKYRFVDLRRERLHRNIMLRSQVITSIRNRMTAQGFTEFQTPILAASSPEGARDYIVPSRLHPGTFYALPQAPQMFKQLLMVAGFDRYFQIAPCFRDEDLRADRSPEFYQLDFEMSFVTQEDVFQAIEPVLAGVFEEFANGKSVTKSGEFPRIPYAEAMLKYGTDKPDLRNPLVISDVTDHFQSSGFGLFEKIVGIGGRVRVIPAPNTQEKSRKFFDDMNDWARKEGFAGLGYVTRKQGEFGGPIAKNHGPENMQKIYDELGLGENDGLFFAAGKEKDAAKLAGAARTRVGEELGLIEQGCFKFCWIVDFPMFEYDEELKKIDFSHNPFSMPQGEMEALENKDPLEILAWQYDIVCNGYELSSGAIRNHKPEIMYKAFEIAGYDRETVDREFSGMIEAFKLGAPPHGGSAPGIDRIVMLLADEPNIREVIAFPLNQKAQDLMMGAPSQVPPKALRDVHIRTVEPPKKQQVGTHLVNDDS</sequence>
<keyword id="KW-0030">Aminoacyl-tRNA synthetase</keyword>
<keyword id="KW-0067">ATP-binding</keyword>
<keyword id="KW-0963">Cytoplasm</keyword>
<keyword id="KW-0436">Ligase</keyword>
<keyword id="KW-0547">Nucleotide-binding</keyword>
<keyword id="KW-0648">Protein biosynthesis</keyword>
<keyword id="KW-1185">Reference proteome</keyword>
<organism>
    <name type="scientific">Erythrobacter litoralis (strain HTCC2594)</name>
    <dbReference type="NCBI Taxonomy" id="314225"/>
    <lineage>
        <taxon>Bacteria</taxon>
        <taxon>Pseudomonadati</taxon>
        <taxon>Pseudomonadota</taxon>
        <taxon>Alphaproteobacteria</taxon>
        <taxon>Sphingomonadales</taxon>
        <taxon>Erythrobacteraceae</taxon>
        <taxon>Erythrobacter/Porphyrobacter group</taxon>
        <taxon>Erythrobacter</taxon>
    </lineage>
</organism>
<gene>
    <name evidence="1" type="primary">aspS</name>
    <name type="ordered locus">ELI_03965</name>
</gene>
<accession>Q2NBQ6</accession>
<dbReference type="EC" id="6.1.1.23" evidence="1"/>
<dbReference type="EMBL" id="CP000157">
    <property type="protein sequence ID" value="ABC62885.1"/>
    <property type="molecule type" value="Genomic_DNA"/>
</dbReference>
<dbReference type="RefSeq" id="WP_011413761.1">
    <property type="nucleotide sequence ID" value="NC_007722.1"/>
</dbReference>
<dbReference type="SMR" id="Q2NBQ6"/>
<dbReference type="STRING" id="314225.ELI_03965"/>
<dbReference type="KEGG" id="eli:ELI_03965"/>
<dbReference type="eggNOG" id="COG0173">
    <property type="taxonomic scope" value="Bacteria"/>
</dbReference>
<dbReference type="HOGENOM" id="CLU_014330_3_2_5"/>
<dbReference type="OrthoDB" id="9802326at2"/>
<dbReference type="Proteomes" id="UP000008808">
    <property type="component" value="Chromosome"/>
</dbReference>
<dbReference type="GO" id="GO:0005737">
    <property type="term" value="C:cytoplasm"/>
    <property type="evidence" value="ECO:0007669"/>
    <property type="project" value="UniProtKB-SubCell"/>
</dbReference>
<dbReference type="GO" id="GO:0004815">
    <property type="term" value="F:aspartate-tRNA ligase activity"/>
    <property type="evidence" value="ECO:0007669"/>
    <property type="project" value="UniProtKB-UniRule"/>
</dbReference>
<dbReference type="GO" id="GO:0050560">
    <property type="term" value="F:aspartate-tRNA(Asn) ligase activity"/>
    <property type="evidence" value="ECO:0007669"/>
    <property type="project" value="UniProtKB-EC"/>
</dbReference>
<dbReference type="GO" id="GO:0005524">
    <property type="term" value="F:ATP binding"/>
    <property type="evidence" value="ECO:0007669"/>
    <property type="project" value="UniProtKB-UniRule"/>
</dbReference>
<dbReference type="GO" id="GO:0003676">
    <property type="term" value="F:nucleic acid binding"/>
    <property type="evidence" value="ECO:0007669"/>
    <property type="project" value="InterPro"/>
</dbReference>
<dbReference type="GO" id="GO:0006422">
    <property type="term" value="P:aspartyl-tRNA aminoacylation"/>
    <property type="evidence" value="ECO:0007669"/>
    <property type="project" value="UniProtKB-UniRule"/>
</dbReference>
<dbReference type="CDD" id="cd00777">
    <property type="entry name" value="AspRS_core"/>
    <property type="match status" value="1"/>
</dbReference>
<dbReference type="CDD" id="cd04317">
    <property type="entry name" value="EcAspRS_like_N"/>
    <property type="match status" value="1"/>
</dbReference>
<dbReference type="Gene3D" id="3.30.930.10">
    <property type="entry name" value="Bira Bifunctional Protein, Domain 2"/>
    <property type="match status" value="1"/>
</dbReference>
<dbReference type="Gene3D" id="3.30.1360.30">
    <property type="entry name" value="GAD-like domain"/>
    <property type="match status" value="1"/>
</dbReference>
<dbReference type="Gene3D" id="2.40.50.140">
    <property type="entry name" value="Nucleic acid-binding proteins"/>
    <property type="match status" value="1"/>
</dbReference>
<dbReference type="HAMAP" id="MF_00044">
    <property type="entry name" value="Asp_tRNA_synth_type1"/>
    <property type="match status" value="1"/>
</dbReference>
<dbReference type="InterPro" id="IPR004364">
    <property type="entry name" value="Aa-tRNA-synt_II"/>
</dbReference>
<dbReference type="InterPro" id="IPR006195">
    <property type="entry name" value="aa-tRNA-synth_II"/>
</dbReference>
<dbReference type="InterPro" id="IPR045864">
    <property type="entry name" value="aa-tRNA-synth_II/BPL/LPL"/>
</dbReference>
<dbReference type="InterPro" id="IPR004524">
    <property type="entry name" value="Asp-tRNA-ligase_1"/>
</dbReference>
<dbReference type="InterPro" id="IPR047089">
    <property type="entry name" value="Asp-tRNA-ligase_1_N"/>
</dbReference>
<dbReference type="InterPro" id="IPR002312">
    <property type="entry name" value="Asp/Asn-tRNA-synth_IIb"/>
</dbReference>
<dbReference type="InterPro" id="IPR047090">
    <property type="entry name" value="AspRS_core"/>
</dbReference>
<dbReference type="InterPro" id="IPR004115">
    <property type="entry name" value="GAD-like_sf"/>
</dbReference>
<dbReference type="InterPro" id="IPR029351">
    <property type="entry name" value="GAD_dom"/>
</dbReference>
<dbReference type="InterPro" id="IPR012340">
    <property type="entry name" value="NA-bd_OB-fold"/>
</dbReference>
<dbReference type="InterPro" id="IPR004365">
    <property type="entry name" value="NA-bd_OB_tRNA"/>
</dbReference>
<dbReference type="NCBIfam" id="TIGR00459">
    <property type="entry name" value="aspS_bact"/>
    <property type="match status" value="1"/>
</dbReference>
<dbReference type="NCBIfam" id="NF001750">
    <property type="entry name" value="PRK00476.1"/>
    <property type="match status" value="1"/>
</dbReference>
<dbReference type="PANTHER" id="PTHR22594:SF5">
    <property type="entry name" value="ASPARTATE--TRNA LIGASE, MITOCHONDRIAL"/>
    <property type="match status" value="1"/>
</dbReference>
<dbReference type="PANTHER" id="PTHR22594">
    <property type="entry name" value="ASPARTYL/LYSYL-TRNA SYNTHETASE"/>
    <property type="match status" value="1"/>
</dbReference>
<dbReference type="Pfam" id="PF02938">
    <property type="entry name" value="GAD"/>
    <property type="match status" value="1"/>
</dbReference>
<dbReference type="Pfam" id="PF00152">
    <property type="entry name" value="tRNA-synt_2"/>
    <property type="match status" value="1"/>
</dbReference>
<dbReference type="Pfam" id="PF01336">
    <property type="entry name" value="tRNA_anti-codon"/>
    <property type="match status" value="1"/>
</dbReference>
<dbReference type="PRINTS" id="PR01042">
    <property type="entry name" value="TRNASYNTHASP"/>
</dbReference>
<dbReference type="SUPFAM" id="SSF55681">
    <property type="entry name" value="Class II aaRS and biotin synthetases"/>
    <property type="match status" value="1"/>
</dbReference>
<dbReference type="SUPFAM" id="SSF55261">
    <property type="entry name" value="GAD domain-like"/>
    <property type="match status" value="1"/>
</dbReference>
<dbReference type="SUPFAM" id="SSF50249">
    <property type="entry name" value="Nucleic acid-binding proteins"/>
    <property type="match status" value="1"/>
</dbReference>
<dbReference type="PROSITE" id="PS50862">
    <property type="entry name" value="AA_TRNA_LIGASE_II"/>
    <property type="match status" value="1"/>
</dbReference>
<feature type="chain" id="PRO_1000006675" description="Aspartate--tRNA(Asp/Asn) ligase">
    <location>
        <begin position="1"/>
        <end position="604"/>
    </location>
</feature>
<feature type="region of interest" description="Aspartate" evidence="1">
    <location>
        <begin position="199"/>
        <end position="202"/>
    </location>
</feature>
<feature type="binding site" evidence="1">
    <location>
        <position position="175"/>
    </location>
    <ligand>
        <name>L-aspartate</name>
        <dbReference type="ChEBI" id="CHEBI:29991"/>
    </ligand>
</feature>
<feature type="binding site" evidence="1">
    <location>
        <begin position="221"/>
        <end position="223"/>
    </location>
    <ligand>
        <name>ATP</name>
        <dbReference type="ChEBI" id="CHEBI:30616"/>
    </ligand>
</feature>
<feature type="binding site" evidence="1">
    <location>
        <position position="221"/>
    </location>
    <ligand>
        <name>L-aspartate</name>
        <dbReference type="ChEBI" id="CHEBI:29991"/>
    </ligand>
</feature>
<feature type="binding site" evidence="1">
    <location>
        <position position="451"/>
    </location>
    <ligand>
        <name>L-aspartate</name>
        <dbReference type="ChEBI" id="CHEBI:29991"/>
    </ligand>
</feature>
<feature type="binding site" evidence="1">
    <location>
        <position position="485"/>
    </location>
    <ligand>
        <name>ATP</name>
        <dbReference type="ChEBI" id="CHEBI:30616"/>
    </ligand>
</feature>
<feature type="binding site" evidence="1">
    <location>
        <position position="492"/>
    </location>
    <ligand>
        <name>L-aspartate</name>
        <dbReference type="ChEBI" id="CHEBI:29991"/>
    </ligand>
</feature>
<feature type="binding site" evidence="1">
    <location>
        <begin position="537"/>
        <end position="540"/>
    </location>
    <ligand>
        <name>ATP</name>
        <dbReference type="ChEBI" id="CHEBI:30616"/>
    </ligand>
</feature>
<feature type="site" description="Important for tRNA non-discrimination" evidence="1">
    <location>
        <position position="33"/>
    </location>
</feature>
<protein>
    <recommendedName>
        <fullName evidence="1">Aspartate--tRNA(Asp/Asn) ligase</fullName>
        <ecNumber evidence="1">6.1.1.23</ecNumber>
    </recommendedName>
    <alternativeName>
        <fullName evidence="1">Aspartyl-tRNA synthetase</fullName>
        <shortName evidence="1">AspRS</shortName>
    </alternativeName>
    <alternativeName>
        <fullName evidence="1">Non-discriminating aspartyl-tRNA synthetase</fullName>
        <shortName evidence="1">ND-AspRS</shortName>
    </alternativeName>
</protein>
<comment type="function">
    <text evidence="1">Aspartyl-tRNA synthetase with relaxed tRNA specificity since it is able to aspartylate not only its cognate tRNA(Asp) but also tRNA(Asn). Reaction proceeds in two steps: L-aspartate is first activated by ATP to form Asp-AMP and then transferred to the acceptor end of tRNA(Asp/Asn).</text>
</comment>
<comment type="catalytic activity">
    <reaction evidence="1">
        <text>tRNA(Asx) + L-aspartate + ATP = L-aspartyl-tRNA(Asx) + AMP + diphosphate</text>
        <dbReference type="Rhea" id="RHEA:18349"/>
        <dbReference type="Rhea" id="RHEA-COMP:9710"/>
        <dbReference type="Rhea" id="RHEA-COMP:9711"/>
        <dbReference type="ChEBI" id="CHEBI:29991"/>
        <dbReference type="ChEBI" id="CHEBI:30616"/>
        <dbReference type="ChEBI" id="CHEBI:33019"/>
        <dbReference type="ChEBI" id="CHEBI:78442"/>
        <dbReference type="ChEBI" id="CHEBI:78516"/>
        <dbReference type="ChEBI" id="CHEBI:456215"/>
        <dbReference type="EC" id="6.1.1.23"/>
    </reaction>
</comment>
<comment type="subunit">
    <text evidence="1">Homodimer.</text>
</comment>
<comment type="subcellular location">
    <subcellularLocation>
        <location evidence="1">Cytoplasm</location>
    </subcellularLocation>
</comment>
<comment type="similarity">
    <text evidence="1">Belongs to the class-II aminoacyl-tRNA synthetase family. Type 1 subfamily.</text>
</comment>
<name>SYDND_ERYLH</name>